<proteinExistence type="inferred from homology"/>
<evidence type="ECO:0000250" key="1">
    <source>
        <dbReference type="UniProtKB" id="P02748"/>
    </source>
</evidence>
<evidence type="ECO:0000255" key="2"/>
<evidence type="ECO:0000255" key="3">
    <source>
        <dbReference type="PROSITE-ProRule" id="PRU00124"/>
    </source>
</evidence>
<evidence type="ECO:0000255" key="4">
    <source>
        <dbReference type="PROSITE-ProRule" id="PRU00210"/>
    </source>
</evidence>
<evidence type="ECO:0000255" key="5">
    <source>
        <dbReference type="PROSITE-ProRule" id="PRU00745"/>
    </source>
</evidence>
<evidence type="ECO:0000305" key="6"/>
<sequence>MRTEAALQLGFCALCVMLALLGEGMGRELPDPPAVNCVWSRWAPWSSCDPCTNTRRRSRGVEVFGQFAGIACQGSVGDREYCITNAKCNLPPPRECSDSEFQCESGSCIKLRLKCNGDYDCEDGSDEDCEPLRKTCPPTVLDTNEQGRTAGYGINILGADPRMNPFNNDFFNGRCDKVRNPNTLQLDRLPWNIGVLNYQTLVEETASREIYEDSYSLLREMLKEMSIKVDAGLSFKFKSTEPSMSNNSLKLDASLEYEKKTMIKDVSELTNIKNKSFMRVKGRLQLSTYRMRSHQLQVADEFVAHVKSLPLEYEKGIYYAFLEDYGTHYTKNGKSGGEYELVYVLNQDTIKAKNLTERKIQECLKIGIEAEFATTSVQDGKAHAKLNKCDDVTTKSQGDVEGKAVVDNVMTSVKGGSLESAVTMRAKLNKEGVMDIATYQNWARTIASAPALINSEPEPIYMLIPTDIPGANSRIANLKQATADYVAEYNVCKCRPCHNGGTLALLDGKCICMCSNLFEGLGCQNFKGDKARVPAARPAVTQEGNWSCWSSWSNCQGQKRSRTRYCNTEGVLGAECRGEIRSEEYC</sequence>
<organism>
    <name type="scientific">Takifugu rubripes</name>
    <name type="common">Japanese pufferfish</name>
    <name type="synonym">Fugu rubripes</name>
    <dbReference type="NCBI Taxonomy" id="31033"/>
    <lineage>
        <taxon>Eukaryota</taxon>
        <taxon>Metazoa</taxon>
        <taxon>Chordata</taxon>
        <taxon>Craniata</taxon>
        <taxon>Vertebrata</taxon>
        <taxon>Euteleostomi</taxon>
        <taxon>Actinopterygii</taxon>
        <taxon>Neopterygii</taxon>
        <taxon>Teleostei</taxon>
        <taxon>Neoteleostei</taxon>
        <taxon>Acanthomorphata</taxon>
        <taxon>Eupercaria</taxon>
        <taxon>Tetraodontiformes</taxon>
        <taxon>Tetradontoidea</taxon>
        <taxon>Tetraodontidae</taxon>
        <taxon>Takifugu</taxon>
    </lineage>
</organism>
<keyword id="KW-0179">Complement alternate pathway</keyword>
<keyword id="KW-0180">Complement pathway</keyword>
<keyword id="KW-0204">Cytolysis</keyword>
<keyword id="KW-1015">Disulfide bond</keyword>
<keyword id="KW-0245">EGF-like domain</keyword>
<keyword id="KW-0325">Glycoprotein</keyword>
<keyword id="KW-0391">Immunity</keyword>
<keyword id="KW-0399">Innate immunity</keyword>
<keyword id="KW-0472">Membrane</keyword>
<keyword id="KW-0473">Membrane attack complex</keyword>
<keyword id="KW-1185">Reference proteome</keyword>
<keyword id="KW-0677">Repeat</keyword>
<keyword id="KW-0964">Secreted</keyword>
<keyword id="KW-0732">Signal</keyword>
<keyword id="KW-1052">Target cell membrane</keyword>
<keyword id="KW-1053">Target membrane</keyword>
<keyword id="KW-0812">Transmembrane</keyword>
<keyword id="KW-1134">Transmembrane beta strand</keyword>
<feature type="signal peptide" evidence="2">
    <location>
        <begin position="1"/>
        <end position="26"/>
    </location>
</feature>
<feature type="chain" id="PRO_0000023608" description="Complement component C9">
    <location>
        <begin position="27"/>
        <end position="586"/>
    </location>
</feature>
<feature type="transmembrane region" description="Beta stranded" evidence="1">
    <location>
        <begin position="229"/>
        <end position="236"/>
    </location>
</feature>
<feature type="transmembrane region" description="Beta stranded" evidence="1">
    <location>
        <begin position="357"/>
        <end position="364"/>
    </location>
</feature>
<feature type="transmembrane region" description="Beta stranded" evidence="1">
    <location>
        <begin position="365"/>
        <end position="373"/>
    </location>
</feature>
<feature type="domain" description="TSP type-1 1" evidence="4">
    <location>
        <begin position="36"/>
        <end position="89"/>
    </location>
</feature>
<feature type="domain" description="LDL-receptor class A" evidence="3">
    <location>
        <begin position="94"/>
        <end position="131"/>
    </location>
</feature>
<feature type="domain" description="MACPF" evidence="5">
    <location>
        <begin position="132"/>
        <end position="493"/>
    </location>
</feature>
<feature type="domain" description="EGF-like">
    <location>
        <begin position="494"/>
        <end position="524"/>
    </location>
</feature>
<feature type="domain" description="TSP type-1 2" evidence="4">
    <location>
        <begin position="543"/>
        <end position="585"/>
    </location>
</feature>
<feature type="glycosylation site" description="N-linked (GlcNAc...) asparagine" evidence="2">
    <location>
        <position position="246"/>
    </location>
</feature>
<feature type="glycosylation site" description="N-linked (GlcNAc...) asparagine" evidence="2">
    <location>
        <position position="274"/>
    </location>
</feature>
<feature type="glycosylation site" description="N-linked (GlcNAc...) asparagine" evidence="2">
    <location>
        <position position="354"/>
    </location>
</feature>
<feature type="glycosylation site" description="N-linked (GlcNAc...) asparagine" evidence="2">
    <location>
        <position position="545"/>
    </location>
</feature>
<feature type="disulfide bond" evidence="1">
    <location>
        <begin position="37"/>
        <end position="72"/>
    </location>
</feature>
<feature type="disulfide bond" evidence="1">
    <location>
        <begin position="48"/>
        <end position="82"/>
    </location>
</feature>
<feature type="disulfide bond" evidence="1">
    <location>
        <begin position="51"/>
        <end position="88"/>
    </location>
</feature>
<feature type="disulfide bond" evidence="1">
    <location>
        <begin position="96"/>
        <end position="108"/>
    </location>
</feature>
<feature type="disulfide bond" evidence="1">
    <location>
        <begin position="103"/>
        <end position="121"/>
    </location>
</feature>
<feature type="disulfide bond" evidence="1">
    <location>
        <begin position="115"/>
        <end position="129"/>
    </location>
</feature>
<feature type="disulfide bond" evidence="1">
    <location>
        <begin position="136"/>
        <end position="175"/>
    </location>
</feature>
<feature type="disulfide bond" evidence="1">
    <location>
        <begin position="363"/>
        <end position="389"/>
    </location>
</feature>
<feature type="disulfide bond" evidence="1">
    <location>
        <begin position="494"/>
        <end position="510"/>
    </location>
</feature>
<feature type="disulfide bond" evidence="1">
    <location>
        <begin position="497"/>
        <end position="512"/>
    </location>
</feature>
<feature type="disulfide bond" evidence="1">
    <location>
        <begin position="514"/>
        <end position="523"/>
    </location>
</feature>
<protein>
    <recommendedName>
        <fullName>Complement component C9</fullName>
    </recommendedName>
</protein>
<name>CO9_TAKRU</name>
<comment type="function">
    <text evidence="1">Pore-forming component of the membrane attack complex (MAC), a multiprotein complex activated by the complement cascade, which inserts into a target cell membrane and forms a pore, leading to target cell membrane rupture and cell lysis. The MAC is initiated by proteolytic cleavage of C5 into complement C5b in response to the classical, alternative, lectin and GZMK complement pathways. The complement pathways consist in a cascade of proteins that leads to phagocytosis and breakdown of pathogens and signaling that strengthens the adaptive immune system. Constitutes the pore-forming subunit of the MAC complex: during MAC assembly, C9 associates with the C5b8 intermediate complex, and polymerizes to complete the pore.</text>
</comment>
<comment type="subunit">
    <text evidence="1">Homooligomer; about 20 C9 chains oligomerize to give rise to a huge beta-barrel that forms a 100 Angstrom diameter pore in target membranes. Component of the membrane attack complex (MAC), composed of complement C5b, C6, C7, C8A, C8B, C8G and multiple copies of the pore-forming subunit C9.</text>
</comment>
<comment type="subcellular location">
    <subcellularLocation>
        <location evidence="1">Secreted</location>
    </subcellularLocation>
    <subcellularLocation>
        <location evidence="1">Target cell membrane</location>
        <topology evidence="1">Multi-pass membrane protein</topology>
    </subcellularLocation>
    <text evidence="1">Secreted as soluble monomer. Oligomerizes at target membranes, forming a pre-pore. A conformation change then leads to the formation of a 100 Angstrom diameter pore.</text>
</comment>
<comment type="similarity">
    <text evidence="6">Belongs to the complement C6/C7/C8/C9 family.</text>
</comment>
<gene>
    <name type="primary">c9</name>
</gene>
<dbReference type="EMBL" id="U87241">
    <property type="protein sequence ID" value="AAC60288.1"/>
    <property type="molecule type" value="Genomic_DNA"/>
</dbReference>
<dbReference type="RefSeq" id="XP_003965317.1">
    <property type="nucleotide sequence ID" value="XM_003965268.3"/>
</dbReference>
<dbReference type="SMR" id="P79755"/>
<dbReference type="FunCoup" id="P79755">
    <property type="interactions" value="852"/>
</dbReference>
<dbReference type="STRING" id="31033.ENSTRUP00000065418"/>
<dbReference type="TCDB" id="1.C.39.3.6">
    <property type="family name" value="the membrane attack complex/perforin (macpf) family"/>
</dbReference>
<dbReference type="GlyCosmos" id="P79755">
    <property type="glycosylation" value="4 sites, No reported glycans"/>
</dbReference>
<dbReference type="GeneID" id="101068974"/>
<dbReference type="KEGG" id="tru:101068974"/>
<dbReference type="CTD" id="735"/>
<dbReference type="eggNOG" id="ENOG502QWHM">
    <property type="taxonomic scope" value="Eukaryota"/>
</dbReference>
<dbReference type="InParanoid" id="P79755"/>
<dbReference type="OrthoDB" id="10037824at2759"/>
<dbReference type="Proteomes" id="UP000005226">
    <property type="component" value="Unplaced"/>
</dbReference>
<dbReference type="GO" id="GO:0005615">
    <property type="term" value="C:extracellular space"/>
    <property type="evidence" value="ECO:0000250"/>
    <property type="project" value="UniProtKB"/>
</dbReference>
<dbReference type="GO" id="GO:0005579">
    <property type="term" value="C:membrane attack complex"/>
    <property type="evidence" value="ECO:0000250"/>
    <property type="project" value="UniProtKB"/>
</dbReference>
<dbReference type="GO" id="GO:0044218">
    <property type="term" value="C:other organism cell membrane"/>
    <property type="evidence" value="ECO:0007669"/>
    <property type="project" value="UniProtKB-KW"/>
</dbReference>
<dbReference type="GO" id="GO:0005886">
    <property type="term" value="C:plasma membrane"/>
    <property type="evidence" value="ECO:0000250"/>
    <property type="project" value="UniProtKB"/>
</dbReference>
<dbReference type="GO" id="GO:0001906">
    <property type="term" value="P:cell killing"/>
    <property type="evidence" value="ECO:0000250"/>
    <property type="project" value="UniProtKB"/>
</dbReference>
<dbReference type="GO" id="GO:0006957">
    <property type="term" value="P:complement activation, alternative pathway"/>
    <property type="evidence" value="ECO:0007669"/>
    <property type="project" value="UniProtKB-KW"/>
</dbReference>
<dbReference type="GO" id="GO:0006958">
    <property type="term" value="P:complement activation, classical pathway"/>
    <property type="evidence" value="ECO:0007669"/>
    <property type="project" value="UniProtKB-KW"/>
</dbReference>
<dbReference type="GO" id="GO:0031640">
    <property type="term" value="P:killing of cells of another organism"/>
    <property type="evidence" value="ECO:0007669"/>
    <property type="project" value="UniProtKB-KW"/>
</dbReference>
<dbReference type="GO" id="GO:0051260">
    <property type="term" value="P:protein homooligomerization"/>
    <property type="evidence" value="ECO:0000250"/>
    <property type="project" value="UniProtKB"/>
</dbReference>
<dbReference type="CDD" id="cd00112">
    <property type="entry name" value="LDLa"/>
    <property type="match status" value="1"/>
</dbReference>
<dbReference type="Gene3D" id="4.10.400.10">
    <property type="entry name" value="Low-density Lipoprotein Receptor"/>
    <property type="match status" value="1"/>
</dbReference>
<dbReference type="InterPro" id="IPR036055">
    <property type="entry name" value="LDL_receptor-like_sf"/>
</dbReference>
<dbReference type="InterPro" id="IPR023415">
    <property type="entry name" value="LDLR_class-A_CS"/>
</dbReference>
<dbReference type="InterPro" id="IPR002172">
    <property type="entry name" value="LDrepeatLR_classA_rpt"/>
</dbReference>
<dbReference type="InterPro" id="IPR001862">
    <property type="entry name" value="MAC_perforin"/>
</dbReference>
<dbReference type="InterPro" id="IPR020864">
    <property type="entry name" value="MACPF"/>
</dbReference>
<dbReference type="InterPro" id="IPR020863">
    <property type="entry name" value="MACPF_CS"/>
</dbReference>
<dbReference type="InterPro" id="IPR000884">
    <property type="entry name" value="TSP1_rpt"/>
</dbReference>
<dbReference type="InterPro" id="IPR036383">
    <property type="entry name" value="TSP1_rpt_sf"/>
</dbReference>
<dbReference type="PANTHER" id="PTHR45742">
    <property type="entry name" value="COMPLEMENT COMPONENT C6"/>
    <property type="match status" value="1"/>
</dbReference>
<dbReference type="PANTHER" id="PTHR45742:SF3">
    <property type="entry name" value="COMPLEMENT COMPONENT C9"/>
    <property type="match status" value="1"/>
</dbReference>
<dbReference type="Pfam" id="PF00057">
    <property type="entry name" value="Ldl_recept_a"/>
    <property type="match status" value="1"/>
</dbReference>
<dbReference type="Pfam" id="PF01823">
    <property type="entry name" value="MACPF"/>
    <property type="match status" value="1"/>
</dbReference>
<dbReference type="PRINTS" id="PR00764">
    <property type="entry name" value="COMPLEMENTC9"/>
</dbReference>
<dbReference type="SMART" id="SM00192">
    <property type="entry name" value="LDLa"/>
    <property type="match status" value="1"/>
</dbReference>
<dbReference type="SMART" id="SM00457">
    <property type="entry name" value="MACPF"/>
    <property type="match status" value="1"/>
</dbReference>
<dbReference type="SMART" id="SM00209">
    <property type="entry name" value="TSP1"/>
    <property type="match status" value="1"/>
</dbReference>
<dbReference type="SUPFAM" id="SSF57424">
    <property type="entry name" value="LDL receptor-like module"/>
    <property type="match status" value="1"/>
</dbReference>
<dbReference type="SUPFAM" id="SSF82895">
    <property type="entry name" value="TSP-1 type 1 repeat"/>
    <property type="match status" value="1"/>
</dbReference>
<dbReference type="PROSITE" id="PS00022">
    <property type="entry name" value="EGF_1"/>
    <property type="match status" value="1"/>
</dbReference>
<dbReference type="PROSITE" id="PS01209">
    <property type="entry name" value="LDLRA_1"/>
    <property type="match status" value="1"/>
</dbReference>
<dbReference type="PROSITE" id="PS50068">
    <property type="entry name" value="LDLRA_2"/>
    <property type="match status" value="1"/>
</dbReference>
<dbReference type="PROSITE" id="PS00279">
    <property type="entry name" value="MACPF_1"/>
    <property type="match status" value="1"/>
</dbReference>
<dbReference type="PROSITE" id="PS51412">
    <property type="entry name" value="MACPF_2"/>
    <property type="match status" value="1"/>
</dbReference>
<dbReference type="PROSITE" id="PS50092">
    <property type="entry name" value="TSP1"/>
    <property type="match status" value="2"/>
</dbReference>
<accession>P79755</accession>
<reference key="1">
    <citation type="journal article" date="1997" name="Gene">
        <title>Cloning and sequencing of complement component C9 and its linkage to DOC-2 in the pufferfish Fugu rubripes.</title>
        <authorList>
            <person name="Yeo G.S.H."/>
            <person name="Elgar G."/>
            <person name="Sandford R."/>
            <person name="Brenner S."/>
        </authorList>
    </citation>
    <scope>NUCLEOTIDE SEQUENCE [GENOMIC DNA]</scope>
</reference>